<feature type="chain" id="PRO_0000234098" description="Cilia- and flagella-associated protein 184">
    <location>
        <begin position="1"/>
        <end position="584"/>
    </location>
</feature>
<feature type="region of interest" description="Disordered" evidence="4">
    <location>
        <begin position="1"/>
        <end position="243"/>
    </location>
</feature>
<feature type="coiled-coil region" evidence="3">
    <location>
        <begin position="317"/>
        <end position="470"/>
    </location>
</feature>
<feature type="coiled-coil region" evidence="3">
    <location>
        <begin position="530"/>
        <end position="561"/>
    </location>
</feature>
<feature type="compositionally biased region" description="Basic and acidic residues" evidence="4">
    <location>
        <begin position="1"/>
        <end position="18"/>
    </location>
</feature>
<feature type="compositionally biased region" description="Basic and acidic residues" evidence="4">
    <location>
        <begin position="42"/>
        <end position="57"/>
    </location>
</feature>
<feature type="compositionally biased region" description="Basic and acidic residues" evidence="4">
    <location>
        <begin position="67"/>
        <end position="82"/>
    </location>
</feature>
<feature type="compositionally biased region" description="Acidic residues" evidence="4">
    <location>
        <begin position="119"/>
        <end position="146"/>
    </location>
</feature>
<feature type="compositionally biased region" description="Basic and acidic residues" evidence="4">
    <location>
        <begin position="189"/>
        <end position="232"/>
    </location>
</feature>
<keyword id="KW-0966">Cell projection</keyword>
<keyword id="KW-0175">Coiled coil</keyword>
<keyword id="KW-0963">Cytoplasm</keyword>
<keyword id="KW-0206">Cytoskeleton</keyword>
<keyword id="KW-1185">Reference proteome</keyword>
<reference key="1">
    <citation type="journal article" date="2005" name="Science">
        <title>The transcriptional landscape of the mammalian genome.</title>
        <authorList>
            <person name="Carninci P."/>
            <person name="Kasukawa T."/>
            <person name="Katayama S."/>
            <person name="Gough J."/>
            <person name="Frith M.C."/>
            <person name="Maeda N."/>
            <person name="Oyama R."/>
            <person name="Ravasi T."/>
            <person name="Lenhard B."/>
            <person name="Wells C."/>
            <person name="Kodzius R."/>
            <person name="Shimokawa K."/>
            <person name="Bajic V.B."/>
            <person name="Brenner S.E."/>
            <person name="Batalov S."/>
            <person name="Forrest A.R."/>
            <person name="Zavolan M."/>
            <person name="Davis M.J."/>
            <person name="Wilming L.G."/>
            <person name="Aidinis V."/>
            <person name="Allen J.E."/>
            <person name="Ambesi-Impiombato A."/>
            <person name="Apweiler R."/>
            <person name="Aturaliya R.N."/>
            <person name="Bailey T.L."/>
            <person name="Bansal M."/>
            <person name="Baxter L."/>
            <person name="Beisel K.W."/>
            <person name="Bersano T."/>
            <person name="Bono H."/>
            <person name="Chalk A.M."/>
            <person name="Chiu K.P."/>
            <person name="Choudhary V."/>
            <person name="Christoffels A."/>
            <person name="Clutterbuck D.R."/>
            <person name="Crowe M.L."/>
            <person name="Dalla E."/>
            <person name="Dalrymple B.P."/>
            <person name="de Bono B."/>
            <person name="Della Gatta G."/>
            <person name="di Bernardo D."/>
            <person name="Down T."/>
            <person name="Engstrom P."/>
            <person name="Fagiolini M."/>
            <person name="Faulkner G."/>
            <person name="Fletcher C.F."/>
            <person name="Fukushima T."/>
            <person name="Furuno M."/>
            <person name="Futaki S."/>
            <person name="Gariboldi M."/>
            <person name="Georgii-Hemming P."/>
            <person name="Gingeras T.R."/>
            <person name="Gojobori T."/>
            <person name="Green R.E."/>
            <person name="Gustincich S."/>
            <person name="Harbers M."/>
            <person name="Hayashi Y."/>
            <person name="Hensch T.K."/>
            <person name="Hirokawa N."/>
            <person name="Hill D."/>
            <person name="Huminiecki L."/>
            <person name="Iacono M."/>
            <person name="Ikeo K."/>
            <person name="Iwama A."/>
            <person name="Ishikawa T."/>
            <person name="Jakt M."/>
            <person name="Kanapin A."/>
            <person name="Katoh M."/>
            <person name="Kawasawa Y."/>
            <person name="Kelso J."/>
            <person name="Kitamura H."/>
            <person name="Kitano H."/>
            <person name="Kollias G."/>
            <person name="Krishnan S.P."/>
            <person name="Kruger A."/>
            <person name="Kummerfeld S.K."/>
            <person name="Kurochkin I.V."/>
            <person name="Lareau L.F."/>
            <person name="Lazarevic D."/>
            <person name="Lipovich L."/>
            <person name="Liu J."/>
            <person name="Liuni S."/>
            <person name="McWilliam S."/>
            <person name="Madan Babu M."/>
            <person name="Madera M."/>
            <person name="Marchionni L."/>
            <person name="Matsuda H."/>
            <person name="Matsuzawa S."/>
            <person name="Miki H."/>
            <person name="Mignone F."/>
            <person name="Miyake S."/>
            <person name="Morris K."/>
            <person name="Mottagui-Tabar S."/>
            <person name="Mulder N."/>
            <person name="Nakano N."/>
            <person name="Nakauchi H."/>
            <person name="Ng P."/>
            <person name="Nilsson R."/>
            <person name="Nishiguchi S."/>
            <person name="Nishikawa S."/>
            <person name="Nori F."/>
            <person name="Ohara O."/>
            <person name="Okazaki Y."/>
            <person name="Orlando V."/>
            <person name="Pang K.C."/>
            <person name="Pavan W.J."/>
            <person name="Pavesi G."/>
            <person name="Pesole G."/>
            <person name="Petrovsky N."/>
            <person name="Piazza S."/>
            <person name="Reed J."/>
            <person name="Reid J.F."/>
            <person name="Ring B.Z."/>
            <person name="Ringwald M."/>
            <person name="Rost B."/>
            <person name="Ruan Y."/>
            <person name="Salzberg S.L."/>
            <person name="Sandelin A."/>
            <person name="Schneider C."/>
            <person name="Schoenbach C."/>
            <person name="Sekiguchi K."/>
            <person name="Semple C.A."/>
            <person name="Seno S."/>
            <person name="Sessa L."/>
            <person name="Sheng Y."/>
            <person name="Shibata Y."/>
            <person name="Shimada H."/>
            <person name="Shimada K."/>
            <person name="Silva D."/>
            <person name="Sinclair B."/>
            <person name="Sperling S."/>
            <person name="Stupka E."/>
            <person name="Sugiura K."/>
            <person name="Sultana R."/>
            <person name="Takenaka Y."/>
            <person name="Taki K."/>
            <person name="Tammoja K."/>
            <person name="Tan S.L."/>
            <person name="Tang S."/>
            <person name="Taylor M.S."/>
            <person name="Tegner J."/>
            <person name="Teichmann S.A."/>
            <person name="Ueda H.R."/>
            <person name="van Nimwegen E."/>
            <person name="Verardo R."/>
            <person name="Wei C.L."/>
            <person name="Yagi K."/>
            <person name="Yamanishi H."/>
            <person name="Zabarovsky E."/>
            <person name="Zhu S."/>
            <person name="Zimmer A."/>
            <person name="Hide W."/>
            <person name="Bult C."/>
            <person name="Grimmond S.M."/>
            <person name="Teasdale R.D."/>
            <person name="Liu E.T."/>
            <person name="Brusic V."/>
            <person name="Quackenbush J."/>
            <person name="Wahlestedt C."/>
            <person name="Mattick J.S."/>
            <person name="Hume D.A."/>
            <person name="Kai C."/>
            <person name="Sasaki D."/>
            <person name="Tomaru Y."/>
            <person name="Fukuda S."/>
            <person name="Kanamori-Katayama M."/>
            <person name="Suzuki M."/>
            <person name="Aoki J."/>
            <person name="Arakawa T."/>
            <person name="Iida J."/>
            <person name="Imamura K."/>
            <person name="Itoh M."/>
            <person name="Kato T."/>
            <person name="Kawaji H."/>
            <person name="Kawagashira N."/>
            <person name="Kawashima T."/>
            <person name="Kojima M."/>
            <person name="Kondo S."/>
            <person name="Konno H."/>
            <person name="Nakano K."/>
            <person name="Ninomiya N."/>
            <person name="Nishio T."/>
            <person name="Okada M."/>
            <person name="Plessy C."/>
            <person name="Shibata K."/>
            <person name="Shiraki T."/>
            <person name="Suzuki S."/>
            <person name="Tagami M."/>
            <person name="Waki K."/>
            <person name="Watahiki A."/>
            <person name="Okamura-Oho Y."/>
            <person name="Suzuki H."/>
            <person name="Kawai J."/>
            <person name="Hayashizaki Y."/>
        </authorList>
    </citation>
    <scope>NUCLEOTIDE SEQUENCE [LARGE SCALE MRNA]</scope>
    <source>
        <strain>C57BL/6J</strain>
        <tissue>Testis</tissue>
    </source>
</reference>
<gene>
    <name type="primary">Cfap184</name>
    <name type="synonym">Ccdc96</name>
</gene>
<dbReference type="EMBL" id="AK014878">
    <property type="protein sequence ID" value="BAB29599.1"/>
    <property type="molecule type" value="mRNA"/>
</dbReference>
<dbReference type="EMBL" id="AK015646">
    <property type="protein sequence ID" value="BAB29914.1"/>
    <property type="molecule type" value="mRNA"/>
</dbReference>
<dbReference type="EMBL" id="AK030023">
    <property type="protein sequence ID" value="BAC26742.1"/>
    <property type="molecule type" value="mRNA"/>
</dbReference>
<dbReference type="CCDS" id="CCDS19239.1"/>
<dbReference type="RefSeq" id="NP_080001.1">
    <property type="nucleotide sequence ID" value="NM_025725.2"/>
</dbReference>
<dbReference type="SMR" id="Q9CR92"/>
<dbReference type="FunCoup" id="Q9CR92">
    <property type="interactions" value="141"/>
</dbReference>
<dbReference type="STRING" id="10090.ENSMUSP00000059636"/>
<dbReference type="GlyGen" id="Q9CR92">
    <property type="glycosylation" value="1 site"/>
</dbReference>
<dbReference type="PhosphoSitePlus" id="Q9CR92"/>
<dbReference type="PaxDb" id="10090-ENSMUSP00000059636"/>
<dbReference type="ProteomicsDB" id="281321"/>
<dbReference type="DNASU" id="66717"/>
<dbReference type="Ensembl" id="ENSMUST00000060100.3">
    <property type="protein sequence ID" value="ENSMUSP00000059636.2"/>
    <property type="gene ID" value="ENSMUSG00000050677.3"/>
</dbReference>
<dbReference type="GeneID" id="66717"/>
<dbReference type="KEGG" id="mmu:66717"/>
<dbReference type="UCSC" id="uc008xeq.1">
    <property type="organism name" value="mouse"/>
</dbReference>
<dbReference type="AGR" id="MGI:1913967"/>
<dbReference type="CTD" id="66717"/>
<dbReference type="MGI" id="MGI:1913967">
    <property type="gene designation" value="Ccdc96"/>
</dbReference>
<dbReference type="VEuPathDB" id="HostDB:ENSMUSG00000050677"/>
<dbReference type="eggNOG" id="ENOG502QS75">
    <property type="taxonomic scope" value="Eukaryota"/>
</dbReference>
<dbReference type="GeneTree" id="ENSGT00940000154521"/>
<dbReference type="HOGENOM" id="CLU_026534_0_0_1"/>
<dbReference type="InParanoid" id="Q9CR92"/>
<dbReference type="OMA" id="NHIQKAN"/>
<dbReference type="OrthoDB" id="10254794at2759"/>
<dbReference type="PhylomeDB" id="Q9CR92"/>
<dbReference type="TreeFam" id="TF328830"/>
<dbReference type="BioGRID-ORCS" id="66717">
    <property type="hits" value="3 hits in 77 CRISPR screens"/>
</dbReference>
<dbReference type="ChiTaRS" id="Ccdc96">
    <property type="organism name" value="mouse"/>
</dbReference>
<dbReference type="PRO" id="PR:Q9CR92"/>
<dbReference type="Proteomes" id="UP000000589">
    <property type="component" value="Chromosome 5"/>
</dbReference>
<dbReference type="RNAct" id="Q9CR92">
    <property type="molecule type" value="protein"/>
</dbReference>
<dbReference type="Bgee" id="ENSMUSG00000050677">
    <property type="expression patterns" value="Expressed in seminiferous tubule of testis and 48 other cell types or tissues"/>
</dbReference>
<dbReference type="GO" id="GO:0005813">
    <property type="term" value="C:centrosome"/>
    <property type="evidence" value="ECO:0007669"/>
    <property type="project" value="UniProtKB-SubCell"/>
</dbReference>
<dbReference type="GO" id="GO:0005929">
    <property type="term" value="C:cilium"/>
    <property type="evidence" value="ECO:0007669"/>
    <property type="project" value="UniProtKB-SubCell"/>
</dbReference>
<dbReference type="GO" id="GO:0005737">
    <property type="term" value="C:cytoplasm"/>
    <property type="evidence" value="ECO:0007669"/>
    <property type="project" value="UniProtKB-KW"/>
</dbReference>
<dbReference type="InterPro" id="IPR051885">
    <property type="entry name" value="CC_domain-Cilium_Assoc"/>
</dbReference>
<dbReference type="InterPro" id="IPR025254">
    <property type="entry name" value="CCDC113/CCDC96_CC"/>
</dbReference>
<dbReference type="PANTHER" id="PTHR15654">
    <property type="entry name" value="COILED-COIL DOMAIN-CONTAINING PROTEIN 113-RELATED"/>
    <property type="match status" value="1"/>
</dbReference>
<dbReference type="PANTHER" id="PTHR15654:SF1">
    <property type="entry name" value="COILED-COIL DOMAIN-CONTAINING PROTEIN 96"/>
    <property type="match status" value="1"/>
</dbReference>
<dbReference type="Pfam" id="PF13870">
    <property type="entry name" value="CCDC113_CCDC96_CC"/>
    <property type="match status" value="1"/>
</dbReference>
<organism>
    <name type="scientific">Mus musculus</name>
    <name type="common">Mouse</name>
    <dbReference type="NCBI Taxonomy" id="10090"/>
    <lineage>
        <taxon>Eukaryota</taxon>
        <taxon>Metazoa</taxon>
        <taxon>Chordata</taxon>
        <taxon>Craniata</taxon>
        <taxon>Vertebrata</taxon>
        <taxon>Euteleostomi</taxon>
        <taxon>Mammalia</taxon>
        <taxon>Eutheria</taxon>
        <taxon>Euarchontoglires</taxon>
        <taxon>Glires</taxon>
        <taxon>Rodentia</taxon>
        <taxon>Myomorpha</taxon>
        <taxon>Muroidea</taxon>
        <taxon>Muridae</taxon>
        <taxon>Murinae</taxon>
        <taxon>Mus</taxon>
        <taxon>Mus</taxon>
    </lineage>
</organism>
<name>CF184_MOUSE</name>
<comment type="function">
    <text evidence="1">In complex with CFAP263, acts as a regulator of ciliary beating that connects radial spoke 3 (RS3) to the inner dynein arm (IDA) and the nexin-dynein regulatory complex (N-DRC). The complex is positioned parallel to N-DRC and forms a connection between the arch at the base of RS3, the IDA tail and N-DRC.</text>
</comment>
<comment type="subunit">
    <text evidence="1">Forms a complex with CFAP263; the interaction is required for functional activity in cilia.</text>
</comment>
<comment type="subcellular location">
    <subcellularLocation>
        <location evidence="1">Cell projection</location>
        <location evidence="1">Cilium</location>
    </subcellularLocation>
    <subcellularLocation>
        <location evidence="2">Cytoplasm</location>
        <location evidence="2">Cytoskeleton</location>
        <location evidence="2">Microtubule organizing center</location>
        <location evidence="2">Centrosome</location>
    </subcellularLocation>
    <text evidence="1">Localizes at cilium but not at the ciliary tips.</text>
</comment>
<comment type="similarity">
    <text evidence="5">Belongs to the CFAP184 family.</text>
</comment>
<evidence type="ECO:0000250" key="1">
    <source>
        <dbReference type="UniProtKB" id="I7M6D6"/>
    </source>
</evidence>
<evidence type="ECO:0000250" key="2">
    <source>
        <dbReference type="UniProtKB" id="Q2M329"/>
    </source>
</evidence>
<evidence type="ECO:0000255" key="3"/>
<evidence type="ECO:0000256" key="4">
    <source>
        <dbReference type="SAM" id="MobiDB-lite"/>
    </source>
</evidence>
<evidence type="ECO:0000305" key="5"/>
<sequence length="584" mass="67256">MDSHYGDIEGKDRAEEGLARQSLEIKVSSEPLTPANPVEQEPEPKPEPEPTQGREPESETQPVSDSSKAKDSEGIDYAHVEVPESPGAAETAGEAVSREPESLPQTQPKTKPESKEPEDKDEDEDEDEDEDEDEDEDEDEDEDEGEERDRPEKPKGKGKREKRKESRFRPSLPLTTIVEEGAAPGPQAAKEKARESLKKRDSEEIEGTDRERHKSTEEQLHPGEAKEEEKQKGASTEEFEWTADMQKLQEQQLRGELVEQYHSLLVERNRYQRYNMYLQQKIHETLRKKGLEAAAEPGDKSAEPESPEKEQAYLRYLAMLEELKKQEADDLEWYRQEVRELKQQCQEKQTRVEKEWRRFQALKKQVVMQVMGSCRTRGGRQAALREVEQLQALEDKKEKEMSAVRLENVQLKQSLVHFETRMKAQEDLAEGLLLIDFEQLKIENQTFNEKVEERNEELLKLRTKVTSNVQIITHVKEKLSFIDTENSCKKAQLSEVDAQVALGRDLLTKTKQARDSLRIDNVKLSQKCGLLGKESLLRDLEEKVEKTEMLNRRLESLKRHHAGLALSCKGVKQKIREAKTFLPS</sequence>
<protein>
    <recommendedName>
        <fullName>Cilia- and flagella-associated protein 184</fullName>
    </recommendedName>
</protein>
<accession>Q9CR92</accession>
<proteinExistence type="evidence at transcript level"/>